<name>COAA_BRUME</name>
<sequence length="322" mass="37477">MWEKVDQLTPSRYSPYRFFSAQEWAAFRADTPLTLTYEEVKRLRSLGDPIDLDEVRRIYLSLSRLLYAHVEASQLLFRQRQQFLNMEESYKTPFIIGVAGSVAVGKSTMARILKELLARWPSSPKVDLVTTDGFLYPNAVLREQNMMERKGFPESYDIGAVLRFLSAIKAGMSRVRAPLYSHLSYDVLPGEYQIVDKPDILIFEGINVLQVRDLPEDGKMVPFVSDFFDFSIYIDADPRLIHKWYIDRFMRLRETAFRDPQSFFHRYSQLSQEAARSIAEGLWQNINLKNLNENILPTRPRADLILRKGSDHLIEEVALRKI</sequence>
<keyword id="KW-0067">ATP-binding</keyword>
<keyword id="KW-0173">Coenzyme A biosynthesis</keyword>
<keyword id="KW-0963">Cytoplasm</keyword>
<keyword id="KW-0418">Kinase</keyword>
<keyword id="KW-0547">Nucleotide-binding</keyword>
<keyword id="KW-0808">Transferase</keyword>
<organism>
    <name type="scientific">Brucella melitensis biotype 1 (strain ATCC 23456 / CCUG 17765 / NCTC 10094 / 16M)</name>
    <dbReference type="NCBI Taxonomy" id="224914"/>
    <lineage>
        <taxon>Bacteria</taxon>
        <taxon>Pseudomonadati</taxon>
        <taxon>Pseudomonadota</taxon>
        <taxon>Alphaproteobacteria</taxon>
        <taxon>Hyphomicrobiales</taxon>
        <taxon>Brucellaceae</taxon>
        <taxon>Brucella/Ochrobactrum group</taxon>
        <taxon>Brucella</taxon>
    </lineage>
</organism>
<protein>
    <recommendedName>
        <fullName evidence="1">Pantothenate kinase</fullName>
        <ecNumber evidence="1">2.7.1.33</ecNumber>
    </recommendedName>
    <alternativeName>
        <fullName evidence="1">Pantothenic acid kinase</fullName>
    </alternativeName>
</protein>
<comment type="catalytic activity">
    <reaction evidence="1">
        <text>(R)-pantothenate + ATP = (R)-4'-phosphopantothenate + ADP + H(+)</text>
        <dbReference type="Rhea" id="RHEA:16373"/>
        <dbReference type="ChEBI" id="CHEBI:10986"/>
        <dbReference type="ChEBI" id="CHEBI:15378"/>
        <dbReference type="ChEBI" id="CHEBI:29032"/>
        <dbReference type="ChEBI" id="CHEBI:30616"/>
        <dbReference type="ChEBI" id="CHEBI:456216"/>
        <dbReference type="EC" id="2.7.1.33"/>
    </reaction>
</comment>
<comment type="pathway">
    <text evidence="1">Cofactor biosynthesis; coenzyme A biosynthesis; CoA from (R)-pantothenate: step 1/5.</text>
</comment>
<comment type="subcellular location">
    <subcellularLocation>
        <location evidence="1">Cytoplasm</location>
    </subcellularLocation>
</comment>
<comment type="similarity">
    <text evidence="1">Belongs to the prokaryotic pantothenate kinase family.</text>
</comment>
<reference key="1">
    <citation type="journal article" date="2002" name="Proc. Natl. Acad. Sci. U.S.A.">
        <title>The genome sequence of the facultative intracellular pathogen Brucella melitensis.</title>
        <authorList>
            <person name="DelVecchio V.G."/>
            <person name="Kapatral V."/>
            <person name="Redkar R.J."/>
            <person name="Patra G."/>
            <person name="Mujer C."/>
            <person name="Los T."/>
            <person name="Ivanova N."/>
            <person name="Anderson I."/>
            <person name="Bhattacharyya A."/>
            <person name="Lykidis A."/>
            <person name="Reznik G."/>
            <person name="Jablonski L."/>
            <person name="Larsen N."/>
            <person name="D'Souza M."/>
            <person name="Bernal A."/>
            <person name="Mazur M."/>
            <person name="Goltsman E."/>
            <person name="Selkov E."/>
            <person name="Elzer P.H."/>
            <person name="Hagius S."/>
            <person name="O'Callaghan D."/>
            <person name="Letesson J.-J."/>
            <person name="Haselkorn R."/>
            <person name="Kyrpides N.C."/>
            <person name="Overbeek R."/>
        </authorList>
    </citation>
    <scope>NUCLEOTIDE SEQUENCE [LARGE SCALE GENOMIC DNA]</scope>
    <source>
        <strain>ATCC 23456 / CCUG 17765 / NCTC 10094 / 16M</strain>
    </source>
</reference>
<accession>P63808</accession>
<accession>Q8YE39</accession>
<evidence type="ECO:0000255" key="1">
    <source>
        <dbReference type="HAMAP-Rule" id="MF_00215"/>
    </source>
</evidence>
<feature type="chain" id="PRO_0000194421" description="Pantothenate kinase">
    <location>
        <begin position="1"/>
        <end position="322"/>
    </location>
</feature>
<feature type="binding site" evidence="1">
    <location>
        <begin position="100"/>
        <end position="107"/>
    </location>
    <ligand>
        <name>ATP</name>
        <dbReference type="ChEBI" id="CHEBI:30616"/>
    </ligand>
</feature>
<proteinExistence type="inferred from homology"/>
<dbReference type="EC" id="2.7.1.33" evidence="1"/>
<dbReference type="EMBL" id="AE008917">
    <property type="protein sequence ID" value="AAL53220.1"/>
    <property type="molecule type" value="Genomic_DNA"/>
</dbReference>
<dbReference type="PIR" id="AI3506">
    <property type="entry name" value="AI3506"/>
</dbReference>
<dbReference type="RefSeq" id="WP_004684544.1">
    <property type="nucleotide sequence ID" value="NZ_GG703778.1"/>
</dbReference>
<dbReference type="SMR" id="P63808"/>
<dbReference type="GeneID" id="97534650"/>
<dbReference type="KEGG" id="bme:BMEI2039"/>
<dbReference type="KEGG" id="bmel:DK63_1454"/>
<dbReference type="PATRIC" id="fig|224914.52.peg.1531"/>
<dbReference type="eggNOG" id="COG1072">
    <property type="taxonomic scope" value="Bacteria"/>
</dbReference>
<dbReference type="PhylomeDB" id="P63808"/>
<dbReference type="UniPathway" id="UPA00241">
    <property type="reaction ID" value="UER00352"/>
</dbReference>
<dbReference type="Proteomes" id="UP000000419">
    <property type="component" value="Chromosome I"/>
</dbReference>
<dbReference type="GO" id="GO:0005737">
    <property type="term" value="C:cytoplasm"/>
    <property type="evidence" value="ECO:0007669"/>
    <property type="project" value="UniProtKB-SubCell"/>
</dbReference>
<dbReference type="GO" id="GO:0005524">
    <property type="term" value="F:ATP binding"/>
    <property type="evidence" value="ECO:0007669"/>
    <property type="project" value="UniProtKB-UniRule"/>
</dbReference>
<dbReference type="GO" id="GO:0004594">
    <property type="term" value="F:pantothenate kinase activity"/>
    <property type="evidence" value="ECO:0007669"/>
    <property type="project" value="UniProtKB-UniRule"/>
</dbReference>
<dbReference type="GO" id="GO:0015937">
    <property type="term" value="P:coenzyme A biosynthetic process"/>
    <property type="evidence" value="ECO:0007669"/>
    <property type="project" value="UniProtKB-UniRule"/>
</dbReference>
<dbReference type="CDD" id="cd02025">
    <property type="entry name" value="PanK"/>
    <property type="match status" value="1"/>
</dbReference>
<dbReference type="Gene3D" id="3.40.50.300">
    <property type="entry name" value="P-loop containing nucleotide triphosphate hydrolases"/>
    <property type="match status" value="1"/>
</dbReference>
<dbReference type="HAMAP" id="MF_00215">
    <property type="entry name" value="Pantothen_kinase_1"/>
    <property type="match status" value="1"/>
</dbReference>
<dbReference type="InterPro" id="IPR027417">
    <property type="entry name" value="P-loop_NTPase"/>
</dbReference>
<dbReference type="InterPro" id="IPR004566">
    <property type="entry name" value="PanK"/>
</dbReference>
<dbReference type="InterPro" id="IPR006083">
    <property type="entry name" value="PRK/URK"/>
</dbReference>
<dbReference type="NCBIfam" id="TIGR00554">
    <property type="entry name" value="panK_bact"/>
    <property type="match status" value="1"/>
</dbReference>
<dbReference type="PANTHER" id="PTHR10285">
    <property type="entry name" value="URIDINE KINASE"/>
    <property type="match status" value="1"/>
</dbReference>
<dbReference type="Pfam" id="PF00485">
    <property type="entry name" value="PRK"/>
    <property type="match status" value="1"/>
</dbReference>
<dbReference type="PIRSF" id="PIRSF000545">
    <property type="entry name" value="Pantothenate_kin"/>
    <property type="match status" value="1"/>
</dbReference>
<dbReference type="SUPFAM" id="SSF52540">
    <property type="entry name" value="P-loop containing nucleoside triphosphate hydrolases"/>
    <property type="match status" value="1"/>
</dbReference>
<gene>
    <name evidence="1" type="primary">coaA</name>
    <name type="ordered locus">BMEI2039</name>
</gene>